<name>NA12_ANEVI</name>
<sequence length="80" mass="8663">MMNRLLVFLMLGAAFMLVVSAIDQDANEDINKRGVPCLCDSDGPSVRGNTLSGIIWLAGCPSGWHNCKKHGPTIGWCCKQ</sequence>
<reference key="1">
    <citation type="journal article" date="2008" name="Mol. Biol. Evol.">
        <title>Concerted evolution of sea anemone neurotoxin genes is revealed through analysis of the Nematostella vectensis genome.</title>
        <authorList>
            <person name="Moran Y."/>
            <person name="Weinberger H."/>
            <person name="Sullivan J.C."/>
            <person name="Reitzel A.M."/>
            <person name="Finnerty J.R."/>
            <person name="Gurevitz M."/>
        </authorList>
    </citation>
    <scope>NUCLEOTIDE SEQUENCE [GENOMIC DNA / MRNA]</scope>
</reference>
<reference key="2">
    <citation type="journal article" date="2006" name="Biochemistry">
        <title>Expression and mutagenesis of the sea anemone toxin Av2 reveals key amino acid residues important for activity on voltage-gated sodium channels.</title>
        <authorList>
            <person name="Moran Y."/>
            <person name="Cohen L."/>
            <person name="Kahn R."/>
            <person name="Karbat I."/>
            <person name="Gordon D."/>
            <person name="Gurevitz M."/>
        </authorList>
    </citation>
    <scope>MUTAGENESIS OF VAL-35; LEU-38; ASP-42; ASN-49; LEU-51 AND ILE-74</scope>
    <scope>TOXIC DOSE</scope>
</reference>
<reference key="3">
    <citation type="journal article" date="2012" name="Proc. R. Soc. B">
        <title>Neurotoxin localization to ectodermal gland cells uncovers an alternative mechanism of venom delivery in sea anemones.</title>
        <authorList>
            <person name="Moran Y."/>
            <person name="Genikhovich G."/>
            <person name="Gordon D."/>
            <person name="Wienkoop S."/>
            <person name="Zenkert C."/>
            <person name="Ozbek S."/>
            <person name="Technau U."/>
            <person name="Gurevitz M."/>
        </authorList>
    </citation>
    <scope>FUNCTION</scope>
    <scope>SUBCELLULAR LOCATION</scope>
    <scope>TISSUE SPECIFICITY</scope>
    <scope>MUTAGENESIS OF LEU-38</scope>
</reference>
<reference key="4">
    <citation type="journal article" date="2012" name="Toxicon">
        <title>Development of a rational nomenclature for naming peptide and protein toxins from sea anemones.</title>
        <authorList>
            <person name="Oliveira J.S."/>
            <person name="Fuentes-Silva D."/>
            <person name="King G.F."/>
        </authorList>
    </citation>
    <scope>NOMENCLATURE</scope>
</reference>
<accession>P0DL49</accession>
<accession>B1NWR0</accession>
<comment type="function">
    <text evidence="1 5">Binds specifically to voltage-gated sodium channels (Nav) (site 3), thereby delaying their inactivation during signal transduction (By similarity). Has a strong effect on crustaceans and insects and a weaker effect on mammals (By similarity). It strongly inhibits D.melanogaster sodium channel (DmNav1) (By similarity). It strongly affects the heart sodium channels (Nav1.5/SCN5A) and weakly inhibits the brain sodium channel Nav1.2/SCN2A (By similarity). In vivo, when released into the medium, this recombinant toxin induces impaired swimming, paralysis and death of the crustacean A.nauplii within several hours (PubMed:22048953). Its effect on zebrafish (D.rerio) larvae is much faster, since it induces paralysis or strong convulsion and impaired swimming, within 10 minutes (PubMed:22048953).</text>
</comment>
<comment type="subcellular location">
    <subcellularLocation>
        <location evidence="9">Secreted</location>
    </subcellularLocation>
    <subcellularLocation>
        <location evidence="9">Nematocyst</location>
    </subcellularLocation>
    <text evidence="9">In nematocyst, is associated with the tubule prior to discharge.</text>
</comment>
<comment type="tissue specificity">
    <text evidence="9">Expressed in gland cells and nematocytes.</text>
</comment>
<comment type="toxic dose">
    <text evidence="3">Dose that immobilizes and contracts insects (ED(50)) is 3.7 pmol/g body weight when intersegmentally injected into S.falculata.</text>
</comment>
<comment type="miscellaneous">
    <text evidence="4">This protein is encoded by at least 3 different genes. At least 3 other genes code for a similar Av2 with an Ile (instead a Val) at position 35.</text>
</comment>
<comment type="similarity">
    <text evidence="8">Belongs to the sea anemone sodium channel inhibitory toxin family. Type I subfamily.</text>
</comment>
<comment type="caution">
    <text evidence="8">Opinions are divided on whether Anemonia viridis (Forsskal, 1775) and Anemonia sulcata (Pennant, 1777) are separate species.</text>
</comment>
<dbReference type="EMBL" id="EU124447">
    <property type="protein sequence ID" value="ABW97326.1"/>
    <property type="molecule type" value="Genomic_DNA"/>
</dbReference>
<dbReference type="EMBL" id="EU124473">
    <property type="protein sequence ID" value="ABW97352.1"/>
    <property type="molecule type" value="mRNA"/>
</dbReference>
<dbReference type="EMBL" id="EU124476">
    <property type="protein sequence ID" value="ABW97355.1"/>
    <property type="molecule type" value="mRNA"/>
</dbReference>
<dbReference type="SMR" id="P0DL49"/>
<dbReference type="GO" id="GO:0005576">
    <property type="term" value="C:extracellular region"/>
    <property type="evidence" value="ECO:0007669"/>
    <property type="project" value="UniProtKB-SubCell"/>
</dbReference>
<dbReference type="GO" id="GO:0042151">
    <property type="term" value="C:nematocyst"/>
    <property type="evidence" value="ECO:0007669"/>
    <property type="project" value="UniProtKB-SubCell"/>
</dbReference>
<dbReference type="GO" id="GO:0017080">
    <property type="term" value="F:sodium channel regulator activity"/>
    <property type="evidence" value="ECO:0007669"/>
    <property type="project" value="UniProtKB-KW"/>
</dbReference>
<dbReference type="GO" id="GO:0090729">
    <property type="term" value="F:toxin activity"/>
    <property type="evidence" value="ECO:0007669"/>
    <property type="project" value="UniProtKB-KW"/>
</dbReference>
<dbReference type="Gene3D" id="2.20.20.10">
    <property type="entry name" value="Anthopleurin-A"/>
    <property type="match status" value="1"/>
</dbReference>
<dbReference type="InterPro" id="IPR023355">
    <property type="entry name" value="Myo_ane_neurotoxin_sf"/>
</dbReference>
<dbReference type="Pfam" id="PF00706">
    <property type="entry name" value="Toxin_4"/>
    <property type="match status" value="1"/>
</dbReference>
<dbReference type="SUPFAM" id="SSF57392">
    <property type="entry name" value="Defensin-like"/>
    <property type="match status" value="1"/>
</dbReference>
<evidence type="ECO:0000250" key="1">
    <source>
        <dbReference type="UniProtKB" id="P01528"/>
    </source>
</evidence>
<evidence type="ECO:0000255" key="2"/>
<evidence type="ECO:0000269" key="3">
    <source>
    </source>
</evidence>
<evidence type="ECO:0000269" key="4">
    <source>
    </source>
</evidence>
<evidence type="ECO:0000269" key="5">
    <source>
    </source>
</evidence>
<evidence type="ECO:0000303" key="6">
    <source>
    </source>
</evidence>
<evidence type="ECO:0000303" key="7">
    <source>
    </source>
</evidence>
<evidence type="ECO:0000305" key="8"/>
<evidence type="ECO:0000305" key="9">
    <source>
    </source>
</evidence>
<evidence type="ECO:0000312" key="10">
    <source>
        <dbReference type="EMBL" id="ABW97326.1"/>
    </source>
</evidence>
<evidence type="ECO:0000312" key="11">
    <source>
        <dbReference type="EMBL" id="ABW97352.1"/>
    </source>
</evidence>
<evidence type="ECO:0000312" key="12">
    <source>
        <dbReference type="EMBL" id="ABW97355.1"/>
    </source>
</evidence>
<organism>
    <name type="scientific">Anemonia viridis</name>
    <name type="common">Snakelocks anemone</name>
    <dbReference type="NCBI Taxonomy" id="51769"/>
    <lineage>
        <taxon>Eukaryota</taxon>
        <taxon>Metazoa</taxon>
        <taxon>Cnidaria</taxon>
        <taxon>Anthozoa</taxon>
        <taxon>Hexacorallia</taxon>
        <taxon>Actiniaria</taxon>
        <taxon>Actiniidae</taxon>
        <taxon>Anemonia</taxon>
    </lineage>
</organism>
<keyword id="KW-0165">Cleavage on pair of basic residues</keyword>
<keyword id="KW-1015">Disulfide bond</keyword>
<keyword id="KW-0872">Ion channel impairing toxin</keyword>
<keyword id="KW-0166">Nematocyst</keyword>
<keyword id="KW-0528">Neurotoxin</keyword>
<keyword id="KW-0964">Secreted</keyword>
<keyword id="KW-0732">Signal</keyword>
<keyword id="KW-0800">Toxin</keyword>
<keyword id="KW-0738">Voltage-gated sodium channel impairing toxin</keyword>
<protein>
    <recommendedName>
        <fullName evidence="7">Delta-actitoxin-Avd1c 1</fullName>
        <shortName evidence="7">Delta-AITX-Avd1c 1</shortName>
    </recommendedName>
    <alternativeName>
        <fullName>Anemonia viridis toxin 2</fullName>
        <shortName evidence="6">Av2</shortName>
        <shortName evidence="7">Avt 2</shortName>
    </alternativeName>
    <alternativeName>
        <fullName>Neurotoxin 2</fullName>
    </alternativeName>
    <alternativeName>
        <fullName evidence="11">Toxin 2c1</fullName>
    </alternativeName>
    <alternativeName>
        <fullName evidence="12">Toxin 2c4</fullName>
    </alternativeName>
    <alternativeName>
        <fullName evidence="10">Toxin Av2-1</fullName>
    </alternativeName>
</protein>
<feature type="signal peptide" evidence="2">
    <location>
        <begin position="1"/>
        <end position="21"/>
    </location>
</feature>
<feature type="propeptide" id="PRO_0000433686" evidence="1">
    <location>
        <begin position="22"/>
        <end position="31"/>
    </location>
</feature>
<feature type="chain" id="PRO_0000433798" description="Delta-actitoxin-Avd1c 1">
    <location>
        <begin position="34"/>
        <end position="80"/>
    </location>
</feature>
<feature type="disulfide bond" evidence="1">
    <location>
        <begin position="37"/>
        <end position="77"/>
    </location>
</feature>
<feature type="disulfide bond" evidence="1">
    <location>
        <begin position="39"/>
        <end position="67"/>
    </location>
</feature>
<feature type="disulfide bond" evidence="1">
    <location>
        <begin position="60"/>
        <end position="78"/>
    </location>
</feature>
<feature type="mutagenesis site" description="9.8-fold decrease in binding affinity to cockroach sodium channels and correlated loss of toxicity to blowfly larvae." evidence="3">
    <original>V</original>
    <variation>A</variation>
    <location>
        <position position="35"/>
    </location>
</feature>
<feature type="mutagenesis site" description="27-fold decrease in binding affinity to cockroach sodium channels and correlated loss of toxicity to blowfly larvae. In vivo, slightly affects fish larvae after several hours." evidence="3 5">
    <original>L</original>
    <variation>A</variation>
    <location>
        <position position="38"/>
    </location>
</feature>
<feature type="mutagenesis site" description="317-fold decrease in binding affinity to cockroach sodium channels and correlated loss of toxicity to blowfly larvae." evidence="3">
    <original>D</original>
    <variation>A</variation>
    <location>
        <position position="42"/>
    </location>
</feature>
<feature type="mutagenesis site" description="11-fold decrease in binding affinity to cockroach sodium channels and correlated loss of toxicity to blowfly larvae." evidence="3">
    <original>N</original>
    <variation>A</variation>
    <location>
        <position position="49"/>
    </location>
</feature>
<feature type="mutagenesis site" description="209-fold decrease in binding affinity to cockroach sodium channels and correlated loss of toxicity to blowfly larvae." evidence="3">
    <original>L</original>
    <variation>A</variation>
    <location>
        <position position="51"/>
    </location>
</feature>
<feature type="mutagenesis site" description="16-fold decrease in binding affinity to cockroach sodium channels and correlated loss of toxicity to blowfly larvae." evidence="3">
    <original>I</original>
    <variation>A</variation>
    <location>
        <position position="74"/>
    </location>
</feature>
<proteinExistence type="evidence at protein level"/>